<sequence length="511" mass="55569">MDINPSEVTKILKEQIKKFGDKAEVTEVGQVLSVGDGIARVYGLDNVQAGEMVEFSDGSKGMALNLESENVGVVIFGDDRKIKEGDVVKRTGSIVDTPVGKELLGRVVDGLGNPIDGKGALDKATKRSRVEVKAPGIIPRQSVSEPMQTGLKSIDSLVPVGRGQRELIIGDRQTGKTAVAIDAIINQKKINESGDEKQKLYCIYVAIGQKRSTVRQIQKTLEEAGAMEYTTIVAATASDAAPLQFLAPYTGCTMGEYYRDNGMHALIIYDDLSKQAVAYRQMSLLLRRPPGREAYPGDVFYLHSRLLERAAKLSDEHGGGSLTALPIIETQGGDVSAFIPTNVISITDGQIFLETELFNQGIRPAINVGLSVSRVGSAAQTKAMKKVSGSMKLELAQYREMAAFAQFGSDLDASTQKLLNRGSKLTELLKQKQYSPMTVAEQVISVFCGVKGYLDDVELKDIAEFESKIIEKCKSEKPEILESVLSSGKLEEDTEKSLVDTIMELKKNFNS</sequence>
<keyword id="KW-0066">ATP synthesis</keyword>
<keyword id="KW-0067">ATP-binding</keyword>
<keyword id="KW-0997">Cell inner membrane</keyword>
<keyword id="KW-1003">Cell membrane</keyword>
<keyword id="KW-0139">CF(1)</keyword>
<keyword id="KW-0375">Hydrogen ion transport</keyword>
<keyword id="KW-0406">Ion transport</keyword>
<keyword id="KW-0472">Membrane</keyword>
<keyword id="KW-0547">Nucleotide-binding</keyword>
<keyword id="KW-1185">Reference proteome</keyword>
<keyword id="KW-1278">Translocase</keyword>
<keyword id="KW-0813">Transport</keyword>
<organism>
    <name type="scientific">Pelagibacter ubique (strain HTCC1062)</name>
    <dbReference type="NCBI Taxonomy" id="335992"/>
    <lineage>
        <taxon>Bacteria</taxon>
        <taxon>Pseudomonadati</taxon>
        <taxon>Pseudomonadota</taxon>
        <taxon>Alphaproteobacteria</taxon>
        <taxon>Candidatus Pelagibacterales</taxon>
        <taxon>Candidatus Pelagibacteraceae</taxon>
        <taxon>Candidatus Pelagibacter</taxon>
    </lineage>
</organism>
<evidence type="ECO:0000255" key="1">
    <source>
        <dbReference type="HAMAP-Rule" id="MF_01346"/>
    </source>
</evidence>
<comment type="function">
    <text evidence="1">Produces ATP from ADP in the presence of a proton gradient across the membrane. The alpha chain is a regulatory subunit.</text>
</comment>
<comment type="catalytic activity">
    <reaction evidence="1">
        <text>ATP + H2O + 4 H(+)(in) = ADP + phosphate + 5 H(+)(out)</text>
        <dbReference type="Rhea" id="RHEA:57720"/>
        <dbReference type="ChEBI" id="CHEBI:15377"/>
        <dbReference type="ChEBI" id="CHEBI:15378"/>
        <dbReference type="ChEBI" id="CHEBI:30616"/>
        <dbReference type="ChEBI" id="CHEBI:43474"/>
        <dbReference type="ChEBI" id="CHEBI:456216"/>
        <dbReference type="EC" id="7.1.2.2"/>
    </reaction>
</comment>
<comment type="subunit">
    <text evidence="1">F-type ATPases have 2 components, CF(1) - the catalytic core - and CF(0) - the membrane proton channel. CF(1) has five subunits: alpha(3), beta(3), gamma(1), delta(1), epsilon(1). CF(0) has three main subunits: a(1), b(2) and c(9-12). The alpha and beta chains form an alternating ring which encloses part of the gamma chain. CF(1) is attached to CF(0) by a central stalk formed by the gamma and epsilon chains, while a peripheral stalk is formed by the delta and b chains.</text>
</comment>
<comment type="subcellular location">
    <subcellularLocation>
        <location evidence="1">Cell inner membrane</location>
        <topology evidence="1">Peripheral membrane protein</topology>
    </subcellularLocation>
</comment>
<comment type="similarity">
    <text evidence="1">Belongs to the ATPase alpha/beta chains family.</text>
</comment>
<proteinExistence type="inferred from homology"/>
<reference key="1">
    <citation type="journal article" date="2005" name="Science">
        <title>Genome streamlining in a cosmopolitan oceanic bacterium.</title>
        <authorList>
            <person name="Giovannoni S.J."/>
            <person name="Tripp H.J."/>
            <person name="Givan S."/>
            <person name="Podar M."/>
            <person name="Vergin K.L."/>
            <person name="Baptista D."/>
            <person name="Bibbs L."/>
            <person name="Eads J."/>
            <person name="Richardson T.H."/>
            <person name="Noordewier M."/>
            <person name="Rappe M.S."/>
            <person name="Short J.M."/>
            <person name="Carrington J.C."/>
            <person name="Mathur E.J."/>
        </authorList>
    </citation>
    <scope>NUCLEOTIDE SEQUENCE [LARGE SCALE GENOMIC DNA]</scope>
    <source>
        <strain>HTCC1062</strain>
    </source>
</reference>
<protein>
    <recommendedName>
        <fullName evidence="1">ATP synthase subunit alpha</fullName>
        <ecNumber evidence="1">7.1.2.2</ecNumber>
    </recommendedName>
    <alternativeName>
        <fullName evidence="1">ATP synthase F1 sector subunit alpha</fullName>
    </alternativeName>
    <alternativeName>
        <fullName evidence="1">F-ATPase subunit alpha</fullName>
    </alternativeName>
</protein>
<dbReference type="EC" id="7.1.2.2" evidence="1"/>
<dbReference type="EMBL" id="CP000084">
    <property type="protein sequence ID" value="AAZ21053.1"/>
    <property type="molecule type" value="Genomic_DNA"/>
</dbReference>
<dbReference type="RefSeq" id="WP_006997678.1">
    <property type="nucleotide sequence ID" value="NC_007205.1"/>
</dbReference>
<dbReference type="SMR" id="Q4FP36"/>
<dbReference type="STRING" id="335992.SAR11_0232"/>
<dbReference type="GeneID" id="66294729"/>
<dbReference type="KEGG" id="pub:SAR11_0232"/>
<dbReference type="eggNOG" id="COG0056">
    <property type="taxonomic scope" value="Bacteria"/>
</dbReference>
<dbReference type="HOGENOM" id="CLU_010091_2_1_5"/>
<dbReference type="OrthoDB" id="9803053at2"/>
<dbReference type="Proteomes" id="UP000002528">
    <property type="component" value="Chromosome"/>
</dbReference>
<dbReference type="GO" id="GO:0005886">
    <property type="term" value="C:plasma membrane"/>
    <property type="evidence" value="ECO:0007669"/>
    <property type="project" value="UniProtKB-SubCell"/>
</dbReference>
<dbReference type="GO" id="GO:0045259">
    <property type="term" value="C:proton-transporting ATP synthase complex"/>
    <property type="evidence" value="ECO:0007669"/>
    <property type="project" value="UniProtKB-KW"/>
</dbReference>
<dbReference type="GO" id="GO:0043531">
    <property type="term" value="F:ADP binding"/>
    <property type="evidence" value="ECO:0007669"/>
    <property type="project" value="TreeGrafter"/>
</dbReference>
<dbReference type="GO" id="GO:0005524">
    <property type="term" value="F:ATP binding"/>
    <property type="evidence" value="ECO:0007669"/>
    <property type="project" value="UniProtKB-UniRule"/>
</dbReference>
<dbReference type="GO" id="GO:0046933">
    <property type="term" value="F:proton-transporting ATP synthase activity, rotational mechanism"/>
    <property type="evidence" value="ECO:0007669"/>
    <property type="project" value="UniProtKB-UniRule"/>
</dbReference>
<dbReference type="CDD" id="cd18113">
    <property type="entry name" value="ATP-synt_F1_alpha_C"/>
    <property type="match status" value="1"/>
</dbReference>
<dbReference type="CDD" id="cd18116">
    <property type="entry name" value="ATP-synt_F1_alpha_N"/>
    <property type="match status" value="1"/>
</dbReference>
<dbReference type="CDD" id="cd01132">
    <property type="entry name" value="F1-ATPase_alpha_CD"/>
    <property type="match status" value="1"/>
</dbReference>
<dbReference type="FunFam" id="1.20.150.20:FF:000001">
    <property type="entry name" value="ATP synthase subunit alpha"/>
    <property type="match status" value="1"/>
</dbReference>
<dbReference type="FunFam" id="2.40.30.20:FF:000001">
    <property type="entry name" value="ATP synthase subunit alpha"/>
    <property type="match status" value="1"/>
</dbReference>
<dbReference type="FunFam" id="3.40.50.300:FF:002432">
    <property type="entry name" value="ATP synthase subunit alpha, mitochondrial"/>
    <property type="match status" value="1"/>
</dbReference>
<dbReference type="Gene3D" id="2.40.30.20">
    <property type="match status" value="1"/>
</dbReference>
<dbReference type="Gene3D" id="1.20.150.20">
    <property type="entry name" value="ATP synthase alpha/beta chain, C-terminal domain"/>
    <property type="match status" value="1"/>
</dbReference>
<dbReference type="Gene3D" id="3.40.50.300">
    <property type="entry name" value="P-loop containing nucleotide triphosphate hydrolases"/>
    <property type="match status" value="1"/>
</dbReference>
<dbReference type="HAMAP" id="MF_01346">
    <property type="entry name" value="ATP_synth_alpha_bact"/>
    <property type="match status" value="1"/>
</dbReference>
<dbReference type="InterPro" id="IPR023366">
    <property type="entry name" value="ATP_synth_asu-like_sf"/>
</dbReference>
<dbReference type="InterPro" id="IPR000793">
    <property type="entry name" value="ATP_synth_asu_C"/>
</dbReference>
<dbReference type="InterPro" id="IPR038376">
    <property type="entry name" value="ATP_synth_asu_C_sf"/>
</dbReference>
<dbReference type="InterPro" id="IPR033732">
    <property type="entry name" value="ATP_synth_F1_a_nt-bd_dom"/>
</dbReference>
<dbReference type="InterPro" id="IPR005294">
    <property type="entry name" value="ATP_synth_F1_asu"/>
</dbReference>
<dbReference type="InterPro" id="IPR020003">
    <property type="entry name" value="ATPase_a/bsu_AS"/>
</dbReference>
<dbReference type="InterPro" id="IPR004100">
    <property type="entry name" value="ATPase_F1/V1/A1_a/bsu_N"/>
</dbReference>
<dbReference type="InterPro" id="IPR036121">
    <property type="entry name" value="ATPase_F1/V1/A1_a/bsu_N_sf"/>
</dbReference>
<dbReference type="InterPro" id="IPR000194">
    <property type="entry name" value="ATPase_F1/V1/A1_a/bsu_nucl-bd"/>
</dbReference>
<dbReference type="InterPro" id="IPR027417">
    <property type="entry name" value="P-loop_NTPase"/>
</dbReference>
<dbReference type="NCBIfam" id="TIGR00962">
    <property type="entry name" value="atpA"/>
    <property type="match status" value="1"/>
</dbReference>
<dbReference type="NCBIfam" id="NF009884">
    <property type="entry name" value="PRK13343.1"/>
    <property type="match status" value="1"/>
</dbReference>
<dbReference type="PANTHER" id="PTHR48082">
    <property type="entry name" value="ATP SYNTHASE SUBUNIT ALPHA, MITOCHONDRIAL"/>
    <property type="match status" value="1"/>
</dbReference>
<dbReference type="PANTHER" id="PTHR48082:SF2">
    <property type="entry name" value="ATP SYNTHASE SUBUNIT ALPHA, MITOCHONDRIAL"/>
    <property type="match status" value="1"/>
</dbReference>
<dbReference type="Pfam" id="PF00006">
    <property type="entry name" value="ATP-synt_ab"/>
    <property type="match status" value="1"/>
</dbReference>
<dbReference type="Pfam" id="PF00306">
    <property type="entry name" value="ATP-synt_ab_C"/>
    <property type="match status" value="1"/>
</dbReference>
<dbReference type="Pfam" id="PF02874">
    <property type="entry name" value="ATP-synt_ab_N"/>
    <property type="match status" value="1"/>
</dbReference>
<dbReference type="PIRSF" id="PIRSF039088">
    <property type="entry name" value="F_ATPase_subunit_alpha"/>
    <property type="match status" value="1"/>
</dbReference>
<dbReference type="SUPFAM" id="SSF47917">
    <property type="entry name" value="C-terminal domain of alpha and beta subunits of F1 ATP synthase"/>
    <property type="match status" value="1"/>
</dbReference>
<dbReference type="SUPFAM" id="SSF50615">
    <property type="entry name" value="N-terminal domain of alpha and beta subunits of F1 ATP synthase"/>
    <property type="match status" value="1"/>
</dbReference>
<dbReference type="SUPFAM" id="SSF52540">
    <property type="entry name" value="P-loop containing nucleoside triphosphate hydrolases"/>
    <property type="match status" value="1"/>
</dbReference>
<dbReference type="PROSITE" id="PS00152">
    <property type="entry name" value="ATPASE_ALPHA_BETA"/>
    <property type="match status" value="1"/>
</dbReference>
<gene>
    <name evidence="1" type="primary">atpA</name>
    <name type="ordered locus">SAR11_0232</name>
</gene>
<feature type="chain" id="PRO_0000238312" description="ATP synthase subunit alpha">
    <location>
        <begin position="1"/>
        <end position="511"/>
    </location>
</feature>
<feature type="binding site" evidence="1">
    <location>
        <begin position="170"/>
        <end position="177"/>
    </location>
    <ligand>
        <name>ATP</name>
        <dbReference type="ChEBI" id="CHEBI:30616"/>
    </ligand>
</feature>
<feature type="site" description="Required for activity" evidence="1">
    <location>
        <position position="371"/>
    </location>
</feature>
<name>ATPA_PELUB</name>
<accession>Q4FP36</accession>